<accession>A0A2K3D1C8</accession>
<proteinExistence type="evidence at protein level"/>
<sequence>MASGQMAPSLLRRPITFVSSCPPALRSFGALCPPTGSTDLIGGTGRDILIAAAPARRAPLHATLPLLRSLHTSPAPQLSASHQHQAQQQQQQTKQPQQPYDPQQDQVPSTSTASSSKPAADPVYNLPNAVSVARLVSGPLIGYWLVQGHYEAATLALAVSGASDWLDGWLARRLGASSVFGSYLDPLADKVLIGCVAAALLMNGAMPGWVAGVVVGRDVLLVAGSFVFRLRGFGWRWPGAAAFFRTVDTSAAAAGAATGAANGVASGGGGGGEGVSFMRPLLISKANTVLQLLLLGGYLLRGMDGGAGLQLLLPGGGGEELIMGLELATAATTVASGLAYGTMAVQGKLFK</sequence>
<name>CRLS1_CHLRE</name>
<gene>
    <name evidence="7" type="ORF">CHLRE_13g604700v5</name>
</gene>
<keyword id="KW-0444">Lipid biosynthesis</keyword>
<keyword id="KW-0443">Lipid metabolism</keyword>
<keyword id="KW-0472">Membrane</keyword>
<keyword id="KW-0496">Mitochondrion</keyword>
<keyword id="KW-0999">Mitochondrion inner membrane</keyword>
<keyword id="KW-0594">Phospholipid biosynthesis</keyword>
<keyword id="KW-1208">Phospholipid metabolism</keyword>
<keyword id="KW-1185">Reference proteome</keyword>
<keyword id="KW-0808">Transferase</keyword>
<keyword id="KW-0809">Transit peptide</keyword>
<keyword id="KW-0812">Transmembrane</keyword>
<keyword id="KW-1133">Transmembrane helix</keyword>
<evidence type="ECO:0000250" key="1">
    <source>
        <dbReference type="UniProtKB" id="Q93YW7"/>
    </source>
</evidence>
<evidence type="ECO:0000255" key="2"/>
<evidence type="ECO:0000256" key="3">
    <source>
        <dbReference type="SAM" id="MobiDB-lite"/>
    </source>
</evidence>
<evidence type="ECO:0000269" key="4">
    <source>
    </source>
</evidence>
<evidence type="ECO:0000305" key="5"/>
<evidence type="ECO:0000305" key="6">
    <source>
    </source>
</evidence>
<evidence type="ECO:0000312" key="7">
    <source>
        <dbReference type="EMBL" id="PNW74341.1"/>
    </source>
</evidence>
<evidence type="ECO:0000312" key="8">
    <source>
        <dbReference type="Proteomes" id="UP000006906"/>
    </source>
</evidence>
<dbReference type="EC" id="2.7.8.41" evidence="6"/>
<dbReference type="EMBL" id="CM008974">
    <property type="protein sequence ID" value="PNW74341.1"/>
    <property type="molecule type" value="Genomic_DNA"/>
</dbReference>
<dbReference type="RefSeq" id="XP_042917822.1">
    <property type="nucleotide sequence ID" value="XM_043069847.1"/>
</dbReference>
<dbReference type="FunCoup" id="A0A2K3D1C8">
    <property type="interactions" value="1504"/>
</dbReference>
<dbReference type="STRING" id="3055.A0A2K3D1C8"/>
<dbReference type="PaxDb" id="3055-EDO98928"/>
<dbReference type="EnsemblPlants" id="PNW74341">
    <property type="protein sequence ID" value="PNW74341"/>
    <property type="gene ID" value="CHLRE_13g604700v5"/>
</dbReference>
<dbReference type="GeneID" id="5724678"/>
<dbReference type="Gramene" id="PNW74341">
    <property type="protein sequence ID" value="PNW74341"/>
    <property type="gene ID" value="CHLRE_13g604700v5"/>
</dbReference>
<dbReference type="InParanoid" id="A0A2K3D1C8"/>
<dbReference type="OMA" id="WSSWAYL"/>
<dbReference type="OrthoDB" id="10020554at2759"/>
<dbReference type="BRENDA" id="2.7.8.5">
    <property type="organism ID" value="1318"/>
</dbReference>
<dbReference type="Proteomes" id="UP000006906">
    <property type="component" value="Chromosome 13"/>
</dbReference>
<dbReference type="ExpressionAtlas" id="A0A2K3D1C8">
    <property type="expression patterns" value="baseline and differential"/>
</dbReference>
<dbReference type="GO" id="GO:0005743">
    <property type="term" value="C:mitochondrial inner membrane"/>
    <property type="evidence" value="ECO:0000250"/>
    <property type="project" value="UniProtKB"/>
</dbReference>
<dbReference type="GO" id="GO:0005739">
    <property type="term" value="C:mitochondrion"/>
    <property type="evidence" value="ECO:0000318"/>
    <property type="project" value="GO_Central"/>
</dbReference>
<dbReference type="GO" id="GO:0043337">
    <property type="term" value="F:cardiolipin synthase (CMP-forming)"/>
    <property type="evidence" value="ECO:0000314"/>
    <property type="project" value="UniProtKB"/>
</dbReference>
<dbReference type="GO" id="GO:0032049">
    <property type="term" value="P:cardiolipin biosynthetic process"/>
    <property type="evidence" value="ECO:0000314"/>
    <property type="project" value="UniProtKB"/>
</dbReference>
<dbReference type="Gene3D" id="1.20.120.1760">
    <property type="match status" value="1"/>
</dbReference>
<dbReference type="InterPro" id="IPR050324">
    <property type="entry name" value="CDP-alcohol_PTase-I"/>
</dbReference>
<dbReference type="InterPro" id="IPR000462">
    <property type="entry name" value="CDP-OH_P_trans"/>
</dbReference>
<dbReference type="InterPro" id="IPR043130">
    <property type="entry name" value="CDP-OH_PTrfase_TM_dom"/>
</dbReference>
<dbReference type="InterPro" id="IPR048254">
    <property type="entry name" value="CDP_ALCOHOL_P_TRANSF_CS"/>
</dbReference>
<dbReference type="PANTHER" id="PTHR14269:SF60">
    <property type="entry name" value="CARDIOLIPIN SYNTHASE (CMP-FORMING)"/>
    <property type="match status" value="1"/>
</dbReference>
<dbReference type="PANTHER" id="PTHR14269">
    <property type="entry name" value="CDP-DIACYLGLYCEROL--GLYCEROL-3-PHOSPHATE 3-PHOSPHATIDYLTRANSFERASE-RELATED"/>
    <property type="match status" value="1"/>
</dbReference>
<dbReference type="Pfam" id="PF01066">
    <property type="entry name" value="CDP-OH_P_transf"/>
    <property type="match status" value="1"/>
</dbReference>
<dbReference type="PROSITE" id="PS00379">
    <property type="entry name" value="CDP_ALCOHOL_P_TRANSF"/>
    <property type="match status" value="1"/>
</dbReference>
<comment type="function">
    <text evidence="1 4">Catalyzes the synthesis of cardiolipin (CL) (diphosphatidylglycerol) by specifically transferring a phosphatidyl group from CDP-diacylglycerol to phosphatidylglycerol (PG) (PubMed:26793177). CL is a key phospholipid in mitochondrial membranes and plays important roles in maintaining the functional integrity and dynamics of mitochondria under both optimal and stress conditions (By similarity). Cannot catalyze the phosphatidyl group transfer from one PG molecule to another to form CL (By similarity).</text>
</comment>
<comment type="catalytic activity">
    <reaction evidence="6">
        <text>a CDP-1,2-diacyl-sn-glycerol + a 1,2-diacyl-sn-glycero-3-phospho-(1'-sn-glycerol) = a cardiolipin + CMP + H(+)</text>
        <dbReference type="Rhea" id="RHEA:32931"/>
        <dbReference type="ChEBI" id="CHEBI:15378"/>
        <dbReference type="ChEBI" id="CHEBI:58332"/>
        <dbReference type="ChEBI" id="CHEBI:60377"/>
        <dbReference type="ChEBI" id="CHEBI:62237"/>
        <dbReference type="ChEBI" id="CHEBI:64716"/>
        <dbReference type="EC" id="2.7.8.41"/>
    </reaction>
</comment>
<comment type="cofactor">
    <cofactor evidence="1">
        <name>Mn(2+)</name>
        <dbReference type="ChEBI" id="CHEBI:29035"/>
    </cofactor>
</comment>
<comment type="subcellular location">
    <subcellularLocation>
        <location evidence="1">Mitochondrion inner membrane</location>
        <topology evidence="1">Multi-pass membrane protein</topology>
    </subcellularLocation>
</comment>
<comment type="similarity">
    <text evidence="5">Belongs to the CDP-alcohol phosphatidyltransferase class-I family.</text>
</comment>
<reference evidence="8" key="1">
    <citation type="journal article" date="2007" name="Science">
        <title>The Chlamydomonas genome reveals the evolution of key animal and plant functions.</title>
        <authorList>
            <person name="Merchant S.S."/>
            <person name="Prochnik S.E."/>
            <person name="Vallon O."/>
            <person name="Harris E.H."/>
            <person name="Karpowicz S.J."/>
            <person name="Witman G.B."/>
            <person name="Terry A."/>
            <person name="Salamov A."/>
            <person name="Fritz-Laylin L.K."/>
            <person name="Marechal-Drouard L."/>
            <person name="Marshall W.F."/>
            <person name="Qu L.H."/>
            <person name="Nelson D.R."/>
            <person name="Sanderfoot A.A."/>
            <person name="Spalding M.H."/>
            <person name="Kapitonov V.V."/>
            <person name="Ren Q."/>
            <person name="Ferris P."/>
            <person name="Lindquist E."/>
            <person name="Shapiro H."/>
            <person name="Lucas S.M."/>
            <person name="Grimwood J."/>
            <person name="Schmutz J."/>
            <person name="Cardol P."/>
            <person name="Cerutti H."/>
            <person name="Chanfreau G."/>
            <person name="Chen C.L."/>
            <person name="Cognat V."/>
            <person name="Croft M.T."/>
            <person name="Dent R."/>
            <person name="Dutcher S."/>
            <person name="Fernandez E."/>
            <person name="Fukuzawa H."/>
            <person name="Gonzalez-Ballester D."/>
            <person name="Gonzalez-Halphen D."/>
            <person name="Hallmann A."/>
            <person name="Hanikenne M."/>
            <person name="Hippler M."/>
            <person name="Inwood W."/>
            <person name="Jabbari K."/>
            <person name="Kalanon M."/>
            <person name="Kuras R."/>
            <person name="Lefebvre P.A."/>
            <person name="Lemaire S.D."/>
            <person name="Lobanov A.V."/>
            <person name="Lohr M."/>
            <person name="Manuell A."/>
            <person name="Meier I."/>
            <person name="Mets L."/>
            <person name="Mittag M."/>
            <person name="Mittelmeier T."/>
            <person name="Moroney J.V."/>
            <person name="Moseley J."/>
            <person name="Napoli C."/>
            <person name="Nedelcu A.M."/>
            <person name="Niyogi K."/>
            <person name="Novoselov S.V."/>
            <person name="Paulsen I.T."/>
            <person name="Pazour G.J."/>
            <person name="Purton S."/>
            <person name="Ral J.P."/>
            <person name="Riano-Pachon D.M."/>
            <person name="Riekhof W."/>
            <person name="Rymarquis L."/>
            <person name="Schroda M."/>
            <person name="Stern D."/>
            <person name="Umen J."/>
            <person name="Willows R."/>
            <person name="Wilson N."/>
            <person name="Zimmer S.L."/>
            <person name="Allmer J."/>
            <person name="Balk J."/>
            <person name="Bisova K."/>
            <person name="Chen C.J."/>
            <person name="Elias M."/>
            <person name="Gendler K."/>
            <person name="Hauser C."/>
            <person name="Lamb M.R."/>
            <person name="Ledford H."/>
            <person name="Long J.C."/>
            <person name="Minagawa J."/>
            <person name="Page M.D."/>
            <person name="Pan J."/>
            <person name="Pootakham W."/>
            <person name="Roje S."/>
            <person name="Rose A."/>
            <person name="Stahlberg E."/>
            <person name="Terauchi A.M."/>
            <person name="Yang P."/>
            <person name="Ball S."/>
            <person name="Bowler C."/>
            <person name="Dieckmann C.L."/>
            <person name="Gladyshev V.N."/>
            <person name="Green P."/>
            <person name="Jorgensen R."/>
            <person name="Mayfield S."/>
            <person name="Mueller-Roeber B."/>
            <person name="Rajamani S."/>
            <person name="Sayre R.T."/>
            <person name="Brokstein P."/>
            <person name="Dubchak I."/>
            <person name="Goodstein D."/>
            <person name="Hornick L."/>
            <person name="Huang Y.W."/>
            <person name="Jhaveri J."/>
            <person name="Luo Y."/>
            <person name="Martinez D."/>
            <person name="Ngau W.C."/>
            <person name="Otillar B."/>
            <person name="Poliakov A."/>
            <person name="Porter A."/>
            <person name="Szajkowski L."/>
            <person name="Werner G."/>
            <person name="Zhou K."/>
            <person name="Grigoriev I.V."/>
            <person name="Rokhsar D.S."/>
            <person name="Grossman A.R."/>
        </authorList>
    </citation>
    <scope>NUCLEOTIDE SEQUENCE [LARGE SCALE GENOMIC DNA]</scope>
    <source>
        <strain evidence="8">CC-503</strain>
    </source>
</reference>
<reference evidence="5" key="2">
    <citation type="journal article" date="2015" name="Front. Microbiol.">
        <title>Functional Specificity of Cardiolipin Synthase Revealed by the Identification of a Cardiolipin Synthase CrCLS1 in Chlamydomonas reinhardtii.</title>
        <authorList>
            <person name="Hung C.H."/>
            <person name="Kobayashi K."/>
            <person name="Wada H."/>
            <person name="Nakamura Y."/>
        </authorList>
    </citation>
    <scope>FUNCTION</scope>
    <scope>CATALYTIC ACTIVITY</scope>
</reference>
<protein>
    <recommendedName>
        <fullName evidence="5">Cardiolipin synthase (CMP-forming)</fullName>
        <shortName>CLS</shortName>
        <ecNumber evidence="6">2.7.8.41</ecNumber>
    </recommendedName>
</protein>
<feature type="transit peptide" description="Mitochondrion" evidence="2">
    <location>
        <begin position="1"/>
        <end status="unknown"/>
    </location>
</feature>
<feature type="chain" id="PRO_0000461868" description="Cardiolipin synthase (CMP-forming)">
    <location>
        <begin status="unknown"/>
        <end position="351"/>
    </location>
</feature>
<feature type="transmembrane region" description="Helical" evidence="2">
    <location>
        <begin position="139"/>
        <end position="159"/>
    </location>
</feature>
<feature type="transmembrane region" description="Helical" evidence="2">
    <location>
        <begin position="191"/>
        <end position="211"/>
    </location>
</feature>
<feature type="transmembrane region" description="Helical" evidence="2">
    <location>
        <begin position="251"/>
        <end position="271"/>
    </location>
</feature>
<feature type="transmembrane region" description="Helical" evidence="2">
    <location>
        <begin position="280"/>
        <end position="300"/>
    </location>
</feature>
<feature type="transmembrane region" description="Helical" evidence="2">
    <location>
        <begin position="321"/>
        <end position="341"/>
    </location>
</feature>
<feature type="region of interest" description="Disordered" evidence="3">
    <location>
        <begin position="74"/>
        <end position="120"/>
    </location>
</feature>
<feature type="compositionally biased region" description="Low complexity" evidence="3">
    <location>
        <begin position="76"/>
        <end position="120"/>
    </location>
</feature>
<organism evidence="8">
    <name type="scientific">Chlamydomonas reinhardtii</name>
    <name type="common">Chlamydomonas smithii</name>
    <dbReference type="NCBI Taxonomy" id="3055"/>
    <lineage>
        <taxon>Eukaryota</taxon>
        <taxon>Viridiplantae</taxon>
        <taxon>Chlorophyta</taxon>
        <taxon>core chlorophytes</taxon>
        <taxon>Chlorophyceae</taxon>
        <taxon>CS clade</taxon>
        <taxon>Chlamydomonadales</taxon>
        <taxon>Chlamydomonadaceae</taxon>
        <taxon>Chlamydomonas</taxon>
    </lineage>
</organism>